<feature type="chain" id="PRO_0000329861" description="Polyribonucleotide nucleotidyltransferase">
    <location>
        <begin position="1"/>
        <end position="702"/>
    </location>
</feature>
<feature type="domain" description="KH" evidence="1">
    <location>
        <begin position="558"/>
        <end position="618"/>
    </location>
</feature>
<feature type="domain" description="S1 motif" evidence="1">
    <location>
        <begin position="628"/>
        <end position="696"/>
    </location>
</feature>
<feature type="binding site" evidence="1">
    <location>
        <position position="491"/>
    </location>
    <ligand>
        <name>Mg(2+)</name>
        <dbReference type="ChEBI" id="CHEBI:18420"/>
    </ligand>
</feature>
<feature type="binding site" evidence="1">
    <location>
        <position position="497"/>
    </location>
    <ligand>
        <name>Mg(2+)</name>
        <dbReference type="ChEBI" id="CHEBI:18420"/>
    </ligand>
</feature>
<evidence type="ECO:0000255" key="1">
    <source>
        <dbReference type="HAMAP-Rule" id="MF_01595"/>
    </source>
</evidence>
<dbReference type="EC" id="2.7.7.8" evidence="1"/>
<dbReference type="EMBL" id="AM285320">
    <property type="protein sequence ID" value="CAK99711.1"/>
    <property type="molecule type" value="Genomic_DNA"/>
</dbReference>
<dbReference type="RefSeq" id="WP_277945223.1">
    <property type="nucleotide sequence ID" value="NZ_CP096807.1"/>
</dbReference>
<dbReference type="SMR" id="Q14LB9"/>
<dbReference type="STRING" id="2133.SCITRI_001688"/>
<dbReference type="GO" id="GO:0005829">
    <property type="term" value="C:cytosol"/>
    <property type="evidence" value="ECO:0007669"/>
    <property type="project" value="TreeGrafter"/>
</dbReference>
<dbReference type="GO" id="GO:0000175">
    <property type="term" value="F:3'-5'-RNA exonuclease activity"/>
    <property type="evidence" value="ECO:0007669"/>
    <property type="project" value="TreeGrafter"/>
</dbReference>
<dbReference type="GO" id="GO:0000287">
    <property type="term" value="F:magnesium ion binding"/>
    <property type="evidence" value="ECO:0007669"/>
    <property type="project" value="UniProtKB-UniRule"/>
</dbReference>
<dbReference type="GO" id="GO:0004654">
    <property type="term" value="F:polyribonucleotide nucleotidyltransferase activity"/>
    <property type="evidence" value="ECO:0007669"/>
    <property type="project" value="UniProtKB-UniRule"/>
</dbReference>
<dbReference type="GO" id="GO:0003723">
    <property type="term" value="F:RNA binding"/>
    <property type="evidence" value="ECO:0007669"/>
    <property type="project" value="UniProtKB-UniRule"/>
</dbReference>
<dbReference type="GO" id="GO:0006402">
    <property type="term" value="P:mRNA catabolic process"/>
    <property type="evidence" value="ECO:0007669"/>
    <property type="project" value="UniProtKB-UniRule"/>
</dbReference>
<dbReference type="GO" id="GO:0006396">
    <property type="term" value="P:RNA processing"/>
    <property type="evidence" value="ECO:0007669"/>
    <property type="project" value="InterPro"/>
</dbReference>
<dbReference type="CDD" id="cd02393">
    <property type="entry name" value="KH-I_PNPase"/>
    <property type="match status" value="1"/>
</dbReference>
<dbReference type="CDD" id="cd11363">
    <property type="entry name" value="RNase_PH_PNPase_1"/>
    <property type="match status" value="1"/>
</dbReference>
<dbReference type="CDD" id="cd11364">
    <property type="entry name" value="RNase_PH_PNPase_2"/>
    <property type="match status" value="1"/>
</dbReference>
<dbReference type="FunFam" id="3.30.1370.10:FF:000001">
    <property type="entry name" value="Polyribonucleotide nucleotidyltransferase"/>
    <property type="match status" value="1"/>
</dbReference>
<dbReference type="FunFam" id="3.30.230.70:FF:000001">
    <property type="entry name" value="Polyribonucleotide nucleotidyltransferase"/>
    <property type="match status" value="1"/>
</dbReference>
<dbReference type="FunFam" id="3.30.230.70:FF:000002">
    <property type="entry name" value="Polyribonucleotide nucleotidyltransferase"/>
    <property type="match status" value="1"/>
</dbReference>
<dbReference type="Gene3D" id="3.30.230.70">
    <property type="entry name" value="GHMP Kinase, N-terminal domain"/>
    <property type="match status" value="2"/>
</dbReference>
<dbReference type="Gene3D" id="3.30.1370.10">
    <property type="entry name" value="K Homology domain, type 1"/>
    <property type="match status" value="1"/>
</dbReference>
<dbReference type="Gene3D" id="2.40.50.140">
    <property type="entry name" value="Nucleic acid-binding proteins"/>
    <property type="match status" value="1"/>
</dbReference>
<dbReference type="HAMAP" id="MF_01595">
    <property type="entry name" value="PNPase"/>
    <property type="match status" value="1"/>
</dbReference>
<dbReference type="InterPro" id="IPR001247">
    <property type="entry name" value="ExoRNase_PH_dom1"/>
</dbReference>
<dbReference type="InterPro" id="IPR015847">
    <property type="entry name" value="ExoRNase_PH_dom2"/>
</dbReference>
<dbReference type="InterPro" id="IPR036345">
    <property type="entry name" value="ExoRNase_PH_dom2_sf"/>
</dbReference>
<dbReference type="InterPro" id="IPR004087">
    <property type="entry name" value="KH_dom"/>
</dbReference>
<dbReference type="InterPro" id="IPR004088">
    <property type="entry name" value="KH_dom_type_1"/>
</dbReference>
<dbReference type="InterPro" id="IPR036612">
    <property type="entry name" value="KH_dom_type_1_sf"/>
</dbReference>
<dbReference type="InterPro" id="IPR012340">
    <property type="entry name" value="NA-bd_OB-fold"/>
</dbReference>
<dbReference type="InterPro" id="IPR012162">
    <property type="entry name" value="PNPase"/>
</dbReference>
<dbReference type="InterPro" id="IPR027408">
    <property type="entry name" value="PNPase/RNase_PH_dom_sf"/>
</dbReference>
<dbReference type="InterPro" id="IPR015848">
    <property type="entry name" value="PNPase_PH_RNA-bd_bac/org-type"/>
</dbReference>
<dbReference type="InterPro" id="IPR036456">
    <property type="entry name" value="PNPase_PH_RNA-bd_sf"/>
</dbReference>
<dbReference type="InterPro" id="IPR020568">
    <property type="entry name" value="Ribosomal_Su5_D2-typ_SF"/>
</dbReference>
<dbReference type="InterPro" id="IPR003029">
    <property type="entry name" value="S1_domain"/>
</dbReference>
<dbReference type="NCBIfam" id="TIGR03591">
    <property type="entry name" value="polynuc_phos"/>
    <property type="match status" value="1"/>
</dbReference>
<dbReference type="NCBIfam" id="NF008805">
    <property type="entry name" value="PRK11824.1"/>
    <property type="match status" value="1"/>
</dbReference>
<dbReference type="PANTHER" id="PTHR11252">
    <property type="entry name" value="POLYRIBONUCLEOTIDE NUCLEOTIDYLTRANSFERASE"/>
    <property type="match status" value="1"/>
</dbReference>
<dbReference type="PANTHER" id="PTHR11252:SF0">
    <property type="entry name" value="POLYRIBONUCLEOTIDE NUCLEOTIDYLTRANSFERASE 1, MITOCHONDRIAL"/>
    <property type="match status" value="1"/>
</dbReference>
<dbReference type="Pfam" id="PF00013">
    <property type="entry name" value="KH_1"/>
    <property type="match status" value="1"/>
</dbReference>
<dbReference type="Pfam" id="PF03726">
    <property type="entry name" value="PNPase"/>
    <property type="match status" value="1"/>
</dbReference>
<dbReference type="Pfam" id="PF01138">
    <property type="entry name" value="RNase_PH"/>
    <property type="match status" value="2"/>
</dbReference>
<dbReference type="Pfam" id="PF03725">
    <property type="entry name" value="RNase_PH_C"/>
    <property type="match status" value="2"/>
</dbReference>
<dbReference type="Pfam" id="PF00575">
    <property type="entry name" value="S1"/>
    <property type="match status" value="1"/>
</dbReference>
<dbReference type="PIRSF" id="PIRSF005499">
    <property type="entry name" value="PNPase"/>
    <property type="match status" value="1"/>
</dbReference>
<dbReference type="SMART" id="SM00322">
    <property type="entry name" value="KH"/>
    <property type="match status" value="1"/>
</dbReference>
<dbReference type="SMART" id="SM00316">
    <property type="entry name" value="S1"/>
    <property type="match status" value="1"/>
</dbReference>
<dbReference type="SUPFAM" id="SSF54791">
    <property type="entry name" value="Eukaryotic type KH-domain (KH-domain type I)"/>
    <property type="match status" value="1"/>
</dbReference>
<dbReference type="SUPFAM" id="SSF50249">
    <property type="entry name" value="Nucleic acid-binding proteins"/>
    <property type="match status" value="1"/>
</dbReference>
<dbReference type="SUPFAM" id="SSF46915">
    <property type="entry name" value="Polynucleotide phosphorylase/guanosine pentaphosphate synthase (PNPase/GPSI), domain 3"/>
    <property type="match status" value="1"/>
</dbReference>
<dbReference type="SUPFAM" id="SSF55666">
    <property type="entry name" value="Ribonuclease PH domain 2-like"/>
    <property type="match status" value="2"/>
</dbReference>
<dbReference type="SUPFAM" id="SSF54211">
    <property type="entry name" value="Ribosomal protein S5 domain 2-like"/>
    <property type="match status" value="2"/>
</dbReference>
<dbReference type="PROSITE" id="PS50084">
    <property type="entry name" value="KH_TYPE_1"/>
    <property type="match status" value="1"/>
</dbReference>
<dbReference type="PROSITE" id="PS50126">
    <property type="entry name" value="S1"/>
    <property type="match status" value="1"/>
</dbReference>
<name>PNP_SPICI</name>
<keyword id="KW-0963">Cytoplasm</keyword>
<keyword id="KW-0460">Magnesium</keyword>
<keyword id="KW-0479">Metal-binding</keyword>
<keyword id="KW-0548">Nucleotidyltransferase</keyword>
<keyword id="KW-0694">RNA-binding</keyword>
<keyword id="KW-0808">Transferase</keyword>
<reference key="1">
    <citation type="submission" date="2006-06" db="EMBL/GenBank/DDBJ databases">
        <title>The partial chromosome sequence of Spiroplasma citri GII3-3X.</title>
        <authorList>
            <person name="Carle P."/>
            <person name="Saillard C."/>
            <person name="Blanchard A."/>
            <person name="Carrere N."/>
            <person name="Carrere S."/>
            <person name="Duret S."/>
            <person name="Eveillard S."/>
            <person name="Gaurivaud P."/>
            <person name="Gourgues G."/>
            <person name="Gouzy J."/>
            <person name="Henry A."/>
            <person name="Salar P."/>
            <person name="Laigret F."/>
            <person name="Bove J.M."/>
            <person name="Renaudin J."/>
            <person name="Foissac X."/>
        </authorList>
    </citation>
    <scope>NUCLEOTIDE SEQUENCE [GENOMIC DNA]</scope>
    <source>
        <strain>GII-3-3X</strain>
    </source>
</reference>
<accession>Q14LB9</accession>
<sequence>MAKQVFKKIINNQELIVEHGQLAKQASGSVLVRYGDTVVLVTATVNNKLSEVDFFPLTVVFQEKLYSVGKIPGGFLKREGKPSEYGTLSARVIDRALRPLFSENFRNEVQIVINVLAVDNDNDVRMVSLFAASLALSISKIPFAGPVAGALVTVDQKNNIIINPTLEQINDGQMELIVAGTDEAINMVEAGAKEVSENLMLQAILAGHDVIQQLIAFQHEIIAKVGVPKMEVELFQVRPEIITYVNNNYAKDLITAARIKEKTKRYETIEHLIEQAIKNYPMPVSLSEKEQKQLTVELKTALHNIIRQEVRRQILIDKTRLDGRKLDQIRPLSSEIDILPVVHGSALFTRGETQVLSVVTLGALGENQIIDGITDEESKRFMHHYNFPAFSVGETGRMGPPSRREIGHGALGEKVLLQIIPSEKVFPYTIRIVSEVLESNGSTSQASICAATLALMAAGVPITAPVVGIAMGLIKEKNNYTILTDIQGMEDHLGDMDFKVAGTATGICALQMDIKIVGINKAILQEALKAAKKARLTILDNVLATISAPRTHLAPTAPKMKTFMIPVDKIREVIGPGGKMITAIIEKSDDVKIDIEDDGQVTIYHKETTAIEKAYQLIKAIAMPVVVGEKIIGPVVKIEKFGVFVHLKENLDGLIHISKLAKQHVEKAEDIVQLNDIVKVKVIEIDGKGKIKLQLIEILPKK</sequence>
<proteinExistence type="inferred from homology"/>
<organism>
    <name type="scientific">Spiroplasma citri</name>
    <dbReference type="NCBI Taxonomy" id="2133"/>
    <lineage>
        <taxon>Bacteria</taxon>
        <taxon>Bacillati</taxon>
        <taxon>Mycoplasmatota</taxon>
        <taxon>Mollicutes</taxon>
        <taxon>Entomoplasmatales</taxon>
        <taxon>Spiroplasmataceae</taxon>
        <taxon>Spiroplasma</taxon>
    </lineage>
</organism>
<protein>
    <recommendedName>
        <fullName evidence="1">Polyribonucleotide nucleotidyltransferase</fullName>
        <ecNumber evidence="1">2.7.7.8</ecNumber>
    </recommendedName>
    <alternativeName>
        <fullName evidence="1">Polynucleotide phosphorylase</fullName>
        <shortName evidence="1">PNPase</shortName>
    </alternativeName>
</protein>
<comment type="function">
    <text evidence="1">Involved in mRNA degradation. Catalyzes the phosphorolysis of single-stranded polyribonucleotides processively in the 3'- to 5'-direction.</text>
</comment>
<comment type="catalytic activity">
    <reaction evidence="1">
        <text>RNA(n+1) + phosphate = RNA(n) + a ribonucleoside 5'-diphosphate</text>
        <dbReference type="Rhea" id="RHEA:22096"/>
        <dbReference type="Rhea" id="RHEA-COMP:14527"/>
        <dbReference type="Rhea" id="RHEA-COMP:17342"/>
        <dbReference type="ChEBI" id="CHEBI:43474"/>
        <dbReference type="ChEBI" id="CHEBI:57930"/>
        <dbReference type="ChEBI" id="CHEBI:140395"/>
        <dbReference type="EC" id="2.7.7.8"/>
    </reaction>
</comment>
<comment type="cofactor">
    <cofactor evidence="1">
        <name>Mg(2+)</name>
        <dbReference type="ChEBI" id="CHEBI:18420"/>
    </cofactor>
</comment>
<comment type="subcellular location">
    <subcellularLocation>
        <location evidence="1">Cytoplasm</location>
    </subcellularLocation>
</comment>
<comment type="similarity">
    <text evidence="1">Belongs to the polyribonucleotide nucleotidyltransferase family.</text>
</comment>
<gene>
    <name evidence="1" type="primary">pnp</name>
    <name type="ORF">SPICI19_061</name>
</gene>